<dbReference type="EMBL" id="AK129151">
    <property type="protein sequence ID" value="BAC97961.1"/>
    <property type="status" value="ALT_INIT"/>
    <property type="molecule type" value="mRNA"/>
</dbReference>
<dbReference type="EMBL" id="BC052892">
    <property type="protein sequence ID" value="AAH52892.1"/>
    <property type="molecule type" value="mRNA"/>
</dbReference>
<dbReference type="EMBL" id="AK052454">
    <property type="protein sequence ID" value="BAC35000.1"/>
    <property type="molecule type" value="mRNA"/>
</dbReference>
<dbReference type="CCDS" id="CCDS17682.1"/>
<dbReference type="RefSeq" id="NP_997088.2">
    <property type="nucleotide sequence ID" value="NM_207205.3"/>
</dbReference>
<dbReference type="RefSeq" id="XP_030108775.1">
    <property type="nucleotide sequence ID" value="XM_030252915.2"/>
</dbReference>
<dbReference type="BioGRID" id="219697">
    <property type="interactions" value="1"/>
</dbReference>
<dbReference type="FunCoup" id="Q6ZQA6">
    <property type="interactions" value="330"/>
</dbReference>
<dbReference type="STRING" id="10090.ENSMUSP00000048900"/>
<dbReference type="GlyConnect" id="2383">
    <property type="glycosylation" value="3 N-Linked glycans (3 sites)"/>
</dbReference>
<dbReference type="GlyCosmos" id="Q6ZQA6">
    <property type="glycosylation" value="6 sites, 3 glycans"/>
</dbReference>
<dbReference type="GlyGen" id="Q6ZQA6">
    <property type="glycosylation" value="6 sites, 6 N-linked glycans (4 sites)"/>
</dbReference>
<dbReference type="iPTMnet" id="Q6ZQA6"/>
<dbReference type="PhosphoSitePlus" id="Q6ZQA6"/>
<dbReference type="PaxDb" id="10090-ENSMUSP00000048900"/>
<dbReference type="PeptideAtlas" id="Q6ZQA6"/>
<dbReference type="ProteomicsDB" id="267303"/>
<dbReference type="Pumba" id="Q6ZQA6"/>
<dbReference type="Antibodypedia" id="46948">
    <property type="antibodies" value="176 antibodies from 27 providers"/>
</dbReference>
<dbReference type="DNASU" id="78908"/>
<dbReference type="Ensembl" id="ENSMUST00000043983.11">
    <property type="protein sequence ID" value="ENSMUSP00000048900.6"/>
    <property type="gene ID" value="ENSMUSG00000042035.12"/>
</dbReference>
<dbReference type="GeneID" id="78908"/>
<dbReference type="KEGG" id="mmu:78908"/>
<dbReference type="UCSC" id="uc008qrg.2">
    <property type="organism name" value="mouse"/>
</dbReference>
<dbReference type="AGR" id="MGI:1926158"/>
<dbReference type="CTD" id="3321"/>
<dbReference type="MGI" id="MGI:1926158">
    <property type="gene designation" value="Igsf3"/>
</dbReference>
<dbReference type="VEuPathDB" id="HostDB:ENSMUSG00000042035"/>
<dbReference type="eggNOG" id="ENOG502QRRB">
    <property type="taxonomic scope" value="Eukaryota"/>
</dbReference>
<dbReference type="GeneTree" id="ENSGT00940000155177"/>
<dbReference type="HOGENOM" id="CLU_005187_0_0_1"/>
<dbReference type="InParanoid" id="Q6ZQA6"/>
<dbReference type="OMA" id="PVSVVWQ"/>
<dbReference type="OrthoDB" id="9890427at2759"/>
<dbReference type="PhylomeDB" id="Q6ZQA6"/>
<dbReference type="TreeFam" id="TF332702"/>
<dbReference type="BioGRID-ORCS" id="78908">
    <property type="hits" value="2 hits in 82 CRISPR screens"/>
</dbReference>
<dbReference type="ChiTaRS" id="Igsf3">
    <property type="organism name" value="mouse"/>
</dbReference>
<dbReference type="PRO" id="PR:Q6ZQA6"/>
<dbReference type="Proteomes" id="UP000000589">
    <property type="component" value="Chromosome 3"/>
</dbReference>
<dbReference type="RNAct" id="Q6ZQA6">
    <property type="molecule type" value="protein"/>
</dbReference>
<dbReference type="Bgee" id="ENSMUSG00000042035">
    <property type="expression patterns" value="Expressed in humerus cartilage element and 201 other cell types or tissues"/>
</dbReference>
<dbReference type="ExpressionAtlas" id="Q6ZQA6">
    <property type="expression patterns" value="baseline and differential"/>
</dbReference>
<dbReference type="GO" id="GO:0016020">
    <property type="term" value="C:membrane"/>
    <property type="evidence" value="ECO:0007669"/>
    <property type="project" value="UniProtKB-SubCell"/>
</dbReference>
<dbReference type="CDD" id="cd00099">
    <property type="entry name" value="IgV"/>
    <property type="match status" value="1"/>
</dbReference>
<dbReference type="FunFam" id="2.60.40.10:FF:000191">
    <property type="entry name" value="Immunoglobulin superfamily member 3"/>
    <property type="match status" value="1"/>
</dbReference>
<dbReference type="FunFam" id="2.60.40.10:FF:000674">
    <property type="entry name" value="Immunoglobulin superfamily member 3"/>
    <property type="match status" value="1"/>
</dbReference>
<dbReference type="FunFam" id="2.60.40.10:FF:000689">
    <property type="entry name" value="Immunoglobulin superfamily member 3"/>
    <property type="match status" value="1"/>
</dbReference>
<dbReference type="FunFam" id="2.60.40.10:FF:000827">
    <property type="entry name" value="Immunoglobulin superfamily member 3"/>
    <property type="match status" value="1"/>
</dbReference>
<dbReference type="FunFam" id="2.60.40.10:FF:000932">
    <property type="entry name" value="Immunoglobulin superfamily member 3"/>
    <property type="match status" value="1"/>
</dbReference>
<dbReference type="FunFam" id="2.60.40.10:FF:000604">
    <property type="entry name" value="immunoglobulin superfamily member 3"/>
    <property type="match status" value="1"/>
</dbReference>
<dbReference type="FunFam" id="2.60.40.10:FF:000491">
    <property type="entry name" value="Immunoglobulin superfamily, member 3"/>
    <property type="match status" value="1"/>
</dbReference>
<dbReference type="FunFam" id="2.60.40.10:FF:003296">
    <property type="entry name" value="Immunoglobulin superfamily, member 3"/>
    <property type="match status" value="1"/>
</dbReference>
<dbReference type="Gene3D" id="2.60.40.10">
    <property type="entry name" value="Immunoglobulins"/>
    <property type="match status" value="8"/>
</dbReference>
<dbReference type="InterPro" id="IPR007110">
    <property type="entry name" value="Ig-like_dom"/>
</dbReference>
<dbReference type="InterPro" id="IPR036179">
    <property type="entry name" value="Ig-like_dom_sf"/>
</dbReference>
<dbReference type="InterPro" id="IPR013783">
    <property type="entry name" value="Ig-like_fold"/>
</dbReference>
<dbReference type="InterPro" id="IPR003599">
    <property type="entry name" value="Ig_sub"/>
</dbReference>
<dbReference type="InterPro" id="IPR013106">
    <property type="entry name" value="Ig_V-set"/>
</dbReference>
<dbReference type="InterPro" id="IPR051102">
    <property type="entry name" value="IgSF_V-set/TM_domain"/>
</dbReference>
<dbReference type="PANTHER" id="PTHR12207">
    <property type="entry name" value="V-SET AND TRANSMEMBRANE DOMAIN-CONTAINING PROTEIN"/>
    <property type="match status" value="1"/>
</dbReference>
<dbReference type="Pfam" id="PF07686">
    <property type="entry name" value="V-set"/>
    <property type="match status" value="4"/>
</dbReference>
<dbReference type="SMART" id="SM00409">
    <property type="entry name" value="IG"/>
    <property type="match status" value="8"/>
</dbReference>
<dbReference type="SMART" id="SM00406">
    <property type="entry name" value="IGv"/>
    <property type="match status" value="4"/>
</dbReference>
<dbReference type="SUPFAM" id="SSF48726">
    <property type="entry name" value="Immunoglobulin"/>
    <property type="match status" value="8"/>
</dbReference>
<dbReference type="PROSITE" id="PS50835">
    <property type="entry name" value="IG_LIKE"/>
    <property type="match status" value="8"/>
</dbReference>
<keyword id="KW-1015">Disulfide bond</keyword>
<keyword id="KW-0325">Glycoprotein</keyword>
<keyword id="KW-0393">Immunoglobulin domain</keyword>
<keyword id="KW-0472">Membrane</keyword>
<keyword id="KW-1185">Reference proteome</keyword>
<keyword id="KW-0677">Repeat</keyword>
<keyword id="KW-0732">Signal</keyword>
<keyword id="KW-0812">Transmembrane</keyword>
<keyword id="KW-1133">Transmembrane helix</keyword>
<protein>
    <recommendedName>
        <fullName>Immunoglobulin superfamily member 3</fullName>
        <shortName>IgSF3</shortName>
    </recommendedName>
</protein>
<reference key="1">
    <citation type="journal article" date="2003" name="DNA Res.">
        <title>Prediction of the coding sequences of mouse homologues of KIAA gene: III. The complete nucleotide sequences of 500 mouse KIAA-homologous cDNAs identified by screening of terminal sequences of cDNA clones randomly sampled from size-fractionated libraries.</title>
        <authorList>
            <person name="Okazaki N."/>
            <person name="Kikuno R."/>
            <person name="Ohara R."/>
            <person name="Inamoto S."/>
            <person name="Koseki H."/>
            <person name="Hiraoka S."/>
            <person name="Saga Y."/>
            <person name="Nagase T."/>
            <person name="Ohara O."/>
            <person name="Koga H."/>
        </authorList>
    </citation>
    <scope>NUCLEOTIDE SEQUENCE [LARGE SCALE MRNA]</scope>
    <source>
        <tissue>Embryonic tail</tissue>
    </source>
</reference>
<reference key="2">
    <citation type="journal article" date="2004" name="Genome Res.">
        <title>The status, quality, and expansion of the NIH full-length cDNA project: the Mammalian Gene Collection (MGC).</title>
        <authorList>
            <consortium name="The MGC Project Team"/>
        </authorList>
    </citation>
    <scope>NUCLEOTIDE SEQUENCE [LARGE SCALE MRNA]</scope>
    <source>
        <strain>C3H/He</strain>
        <tissue>Osteoblast</tissue>
    </source>
</reference>
<reference key="3">
    <citation type="journal article" date="2005" name="Science">
        <title>The transcriptional landscape of the mammalian genome.</title>
        <authorList>
            <person name="Carninci P."/>
            <person name="Kasukawa T."/>
            <person name="Katayama S."/>
            <person name="Gough J."/>
            <person name="Frith M.C."/>
            <person name="Maeda N."/>
            <person name="Oyama R."/>
            <person name="Ravasi T."/>
            <person name="Lenhard B."/>
            <person name="Wells C."/>
            <person name="Kodzius R."/>
            <person name="Shimokawa K."/>
            <person name="Bajic V.B."/>
            <person name="Brenner S.E."/>
            <person name="Batalov S."/>
            <person name="Forrest A.R."/>
            <person name="Zavolan M."/>
            <person name="Davis M.J."/>
            <person name="Wilming L.G."/>
            <person name="Aidinis V."/>
            <person name="Allen J.E."/>
            <person name="Ambesi-Impiombato A."/>
            <person name="Apweiler R."/>
            <person name="Aturaliya R.N."/>
            <person name="Bailey T.L."/>
            <person name="Bansal M."/>
            <person name="Baxter L."/>
            <person name="Beisel K.W."/>
            <person name="Bersano T."/>
            <person name="Bono H."/>
            <person name="Chalk A.M."/>
            <person name="Chiu K.P."/>
            <person name="Choudhary V."/>
            <person name="Christoffels A."/>
            <person name="Clutterbuck D.R."/>
            <person name="Crowe M.L."/>
            <person name="Dalla E."/>
            <person name="Dalrymple B.P."/>
            <person name="de Bono B."/>
            <person name="Della Gatta G."/>
            <person name="di Bernardo D."/>
            <person name="Down T."/>
            <person name="Engstrom P."/>
            <person name="Fagiolini M."/>
            <person name="Faulkner G."/>
            <person name="Fletcher C.F."/>
            <person name="Fukushima T."/>
            <person name="Furuno M."/>
            <person name="Futaki S."/>
            <person name="Gariboldi M."/>
            <person name="Georgii-Hemming P."/>
            <person name="Gingeras T.R."/>
            <person name="Gojobori T."/>
            <person name="Green R.E."/>
            <person name="Gustincich S."/>
            <person name="Harbers M."/>
            <person name="Hayashi Y."/>
            <person name="Hensch T.K."/>
            <person name="Hirokawa N."/>
            <person name="Hill D."/>
            <person name="Huminiecki L."/>
            <person name="Iacono M."/>
            <person name="Ikeo K."/>
            <person name="Iwama A."/>
            <person name="Ishikawa T."/>
            <person name="Jakt M."/>
            <person name="Kanapin A."/>
            <person name="Katoh M."/>
            <person name="Kawasawa Y."/>
            <person name="Kelso J."/>
            <person name="Kitamura H."/>
            <person name="Kitano H."/>
            <person name="Kollias G."/>
            <person name="Krishnan S.P."/>
            <person name="Kruger A."/>
            <person name="Kummerfeld S.K."/>
            <person name="Kurochkin I.V."/>
            <person name="Lareau L.F."/>
            <person name="Lazarevic D."/>
            <person name="Lipovich L."/>
            <person name="Liu J."/>
            <person name="Liuni S."/>
            <person name="McWilliam S."/>
            <person name="Madan Babu M."/>
            <person name="Madera M."/>
            <person name="Marchionni L."/>
            <person name="Matsuda H."/>
            <person name="Matsuzawa S."/>
            <person name="Miki H."/>
            <person name="Mignone F."/>
            <person name="Miyake S."/>
            <person name="Morris K."/>
            <person name="Mottagui-Tabar S."/>
            <person name="Mulder N."/>
            <person name="Nakano N."/>
            <person name="Nakauchi H."/>
            <person name="Ng P."/>
            <person name="Nilsson R."/>
            <person name="Nishiguchi S."/>
            <person name="Nishikawa S."/>
            <person name="Nori F."/>
            <person name="Ohara O."/>
            <person name="Okazaki Y."/>
            <person name="Orlando V."/>
            <person name="Pang K.C."/>
            <person name="Pavan W.J."/>
            <person name="Pavesi G."/>
            <person name="Pesole G."/>
            <person name="Petrovsky N."/>
            <person name="Piazza S."/>
            <person name="Reed J."/>
            <person name="Reid J.F."/>
            <person name="Ring B.Z."/>
            <person name="Ringwald M."/>
            <person name="Rost B."/>
            <person name="Ruan Y."/>
            <person name="Salzberg S.L."/>
            <person name="Sandelin A."/>
            <person name="Schneider C."/>
            <person name="Schoenbach C."/>
            <person name="Sekiguchi K."/>
            <person name="Semple C.A."/>
            <person name="Seno S."/>
            <person name="Sessa L."/>
            <person name="Sheng Y."/>
            <person name="Shibata Y."/>
            <person name="Shimada H."/>
            <person name="Shimada K."/>
            <person name="Silva D."/>
            <person name="Sinclair B."/>
            <person name="Sperling S."/>
            <person name="Stupka E."/>
            <person name="Sugiura K."/>
            <person name="Sultana R."/>
            <person name="Takenaka Y."/>
            <person name="Taki K."/>
            <person name="Tammoja K."/>
            <person name="Tan S.L."/>
            <person name="Tang S."/>
            <person name="Taylor M.S."/>
            <person name="Tegner J."/>
            <person name="Teichmann S.A."/>
            <person name="Ueda H.R."/>
            <person name="van Nimwegen E."/>
            <person name="Verardo R."/>
            <person name="Wei C.L."/>
            <person name="Yagi K."/>
            <person name="Yamanishi H."/>
            <person name="Zabarovsky E."/>
            <person name="Zhu S."/>
            <person name="Zimmer A."/>
            <person name="Hide W."/>
            <person name="Bult C."/>
            <person name="Grimmond S.M."/>
            <person name="Teasdale R.D."/>
            <person name="Liu E.T."/>
            <person name="Brusic V."/>
            <person name="Quackenbush J."/>
            <person name="Wahlestedt C."/>
            <person name="Mattick J.S."/>
            <person name="Hume D.A."/>
            <person name="Kai C."/>
            <person name="Sasaki D."/>
            <person name="Tomaru Y."/>
            <person name="Fukuda S."/>
            <person name="Kanamori-Katayama M."/>
            <person name="Suzuki M."/>
            <person name="Aoki J."/>
            <person name="Arakawa T."/>
            <person name="Iida J."/>
            <person name="Imamura K."/>
            <person name="Itoh M."/>
            <person name="Kato T."/>
            <person name="Kawaji H."/>
            <person name="Kawagashira N."/>
            <person name="Kawashima T."/>
            <person name="Kojima M."/>
            <person name="Kondo S."/>
            <person name="Konno H."/>
            <person name="Nakano K."/>
            <person name="Ninomiya N."/>
            <person name="Nishio T."/>
            <person name="Okada M."/>
            <person name="Plessy C."/>
            <person name="Shibata K."/>
            <person name="Shiraki T."/>
            <person name="Suzuki S."/>
            <person name="Tagami M."/>
            <person name="Waki K."/>
            <person name="Watahiki A."/>
            <person name="Okamura-Oho Y."/>
            <person name="Suzuki H."/>
            <person name="Kawai J."/>
            <person name="Hayashizaki Y."/>
        </authorList>
    </citation>
    <scope>NUCLEOTIDE SEQUENCE [LARGE SCALE MRNA] OF 717-1194</scope>
    <source>
        <strain>C57BL/6J</strain>
        <tissue>Lung</tissue>
    </source>
</reference>
<reference key="4">
    <citation type="journal article" date="2009" name="Nat. Biotechnol.">
        <title>Mass-spectrometric identification and relative quantification of N-linked cell surface glycoproteins.</title>
        <authorList>
            <person name="Wollscheid B."/>
            <person name="Bausch-Fluck D."/>
            <person name="Henderson C."/>
            <person name="O'Brien R."/>
            <person name="Bibel M."/>
            <person name="Schiess R."/>
            <person name="Aebersold R."/>
            <person name="Watts J.D."/>
        </authorList>
    </citation>
    <scope>GLYCOSYLATION [LARGE SCALE ANALYSIS] AT ASN-1077</scope>
</reference>
<reference key="5">
    <citation type="journal article" date="2014" name="Clin. Genet.">
        <title>Identification of an IGSF3 mutation in a family with congenital nasolacrimal duct obstruction.</title>
        <authorList>
            <person name="Foster J."/>
            <person name="Kapoor S."/>
            <person name="Diaz-Horta O."/>
            <person name="Singh A."/>
            <person name="Abad C."/>
            <person name="Rastogi A."/>
            <person name="Moharana R."/>
            <person name="Tekeli O."/>
            <person name="Walz K."/>
            <person name="Tekin M."/>
        </authorList>
    </citation>
    <scope>DEVELOPMENTAL STAGE</scope>
    <scope>TISSUE SPECIFICITY</scope>
</reference>
<evidence type="ECO:0000255" key="1"/>
<evidence type="ECO:0000255" key="2">
    <source>
        <dbReference type="PROSITE-ProRule" id="PRU00114"/>
    </source>
</evidence>
<evidence type="ECO:0000256" key="3">
    <source>
        <dbReference type="SAM" id="MobiDB-lite"/>
    </source>
</evidence>
<evidence type="ECO:0000269" key="4">
    <source>
    </source>
</evidence>
<evidence type="ECO:0000269" key="5">
    <source>
    </source>
</evidence>
<evidence type="ECO:0000305" key="6"/>
<accession>Q6ZQA6</accession>
<accession>A0A4X9</accession>
<accession>Q7TPV3</accession>
<feature type="signal peptide" evidence="1">
    <location>
        <begin position="1"/>
        <end position="19"/>
    </location>
</feature>
<feature type="chain" id="PRO_0000320135" description="Immunoglobulin superfamily member 3">
    <location>
        <begin position="20"/>
        <end position="1194"/>
    </location>
</feature>
<feature type="topological domain" description="Extracellular" evidence="1">
    <location>
        <begin position="20"/>
        <end position="1124"/>
    </location>
</feature>
<feature type="transmembrane region" description="Helical" evidence="1">
    <location>
        <begin position="1125"/>
        <end position="1145"/>
    </location>
</feature>
<feature type="topological domain" description="Cytoplasmic" evidence="1">
    <location>
        <begin position="1146"/>
        <end position="1194"/>
    </location>
</feature>
<feature type="domain" description="Ig-like C2-type 1">
    <location>
        <begin position="20"/>
        <end position="138"/>
    </location>
</feature>
<feature type="domain" description="Ig-like C2-type 2">
    <location>
        <begin position="143"/>
        <end position="262"/>
    </location>
</feature>
<feature type="domain" description="Ig-like C2-type 3">
    <location>
        <begin position="276"/>
        <end position="386"/>
    </location>
</feature>
<feature type="domain" description="Ig-like C2-type 4">
    <location>
        <begin position="401"/>
        <end position="539"/>
    </location>
</feature>
<feature type="domain" description="Ig-like C2-type 5">
    <location>
        <begin position="545"/>
        <end position="661"/>
    </location>
</feature>
<feature type="domain" description="Ig-like C2-type 6">
    <location>
        <begin position="676"/>
        <end position="803"/>
    </location>
</feature>
<feature type="domain" description="Ig-like C2-type 7">
    <location>
        <begin position="813"/>
        <end position="945"/>
    </location>
</feature>
<feature type="domain" description="Ig-like C2-type 8">
    <location>
        <begin position="949"/>
        <end position="1097"/>
    </location>
</feature>
<feature type="region of interest" description="Disordered" evidence="3">
    <location>
        <begin position="997"/>
        <end position="1030"/>
    </location>
</feature>
<feature type="short sequence motif" description="EWI motif">
    <location>
        <begin position="250"/>
        <end position="252"/>
    </location>
</feature>
<feature type="compositionally biased region" description="Acidic residues" evidence="3">
    <location>
        <begin position="1007"/>
        <end position="1026"/>
    </location>
</feature>
<feature type="glycosylation site" description="N-linked (GlcNAc...) asparagine" evidence="1">
    <location>
        <position position="43"/>
    </location>
</feature>
<feature type="glycosylation site" description="N-linked (GlcNAc...) asparagine" evidence="1">
    <location>
        <position position="418"/>
    </location>
</feature>
<feature type="glycosylation site" description="N-linked (GlcNAc...) asparagine" evidence="1">
    <location>
        <position position="842"/>
    </location>
</feature>
<feature type="glycosylation site" description="N-linked (GlcNAc...) asparagine" evidence="4">
    <location>
        <position position="1077"/>
    </location>
</feature>
<feature type="disulfide bond" evidence="2">
    <location>
        <begin position="42"/>
        <end position="120"/>
    </location>
</feature>
<feature type="disulfide bond" evidence="2">
    <location>
        <begin position="167"/>
        <end position="246"/>
    </location>
</feature>
<feature type="disulfide bond" evidence="2">
    <location>
        <begin position="302"/>
        <end position="376"/>
    </location>
</feature>
<feature type="disulfide bond" evidence="2">
    <location>
        <begin position="432"/>
        <end position="511"/>
    </location>
</feature>
<feature type="disulfide bond" evidence="2">
    <location>
        <begin position="566"/>
        <end position="645"/>
    </location>
</feature>
<feature type="disulfide bond" evidence="2">
    <location>
        <begin position="701"/>
        <end position="782"/>
    </location>
</feature>
<feature type="disulfide bond" evidence="2">
    <location>
        <begin position="838"/>
        <end position="918"/>
    </location>
</feature>
<feature type="disulfide bond" evidence="2">
    <location>
        <begin position="974"/>
        <end position="1080"/>
    </location>
</feature>
<feature type="sequence conflict" description="In Ref. 2; AAH52892." evidence="6" ref="2">
    <original>E</original>
    <variation>G</variation>
    <location>
        <position position="523"/>
    </location>
</feature>
<feature type="sequence conflict" description="In Ref. 2; AAH52892." evidence="6" ref="2">
    <original>E</original>
    <variation>D</variation>
    <location>
        <position position="800"/>
    </location>
</feature>
<sequence length="1194" mass="134710">MKCFFPVLSCLAVLGVVSAQRQVTVQEGPLYRTESSHITIWCNVSGYQGPSEQNFQWSIYLPSAPEREVQIVSTVDSSFPYAIYTQRVRGGKIYVERIQGNSALLHITDLQARDAGEYECHTPNTDERYFGSYSAKMNLVVIPDSLQTTAVPQTLHKVEQDPLELSCEVATETVQHTHLSVSWLRQKGGENPVEVISLSRDFILHSSSEYAQRQSLGEVRLDKLGRSTFRLTIFHLQPSDQGEFYCEAAEWIQDPDGSWYAMTRKRSEGAVVNVQPTDKEFTVRLETDKRLHTVGEPVEFRCILEAQNIPDRYFAVSWAFNSSLIATMGPNAVPVLNSDFAHREAKGQLKVAKESDGVFVLKIYHLRQEDSGKYNCRVTEREKTVTGEFIDKESKRPKNIPIVVLPLKSSISVEVASNASVVLEGEDLHFSCTVRTVGRLQARFSVIWQLVDRQNRRSNVMWLDRDGTLQPGSAYWERSSYGGIQMEQVQPNSFSLGIFNSRKEDEGQYECHVTEWVRAVDGEWQIVGERRASTLVSITALETGFAVTAISRTPGVTYSDSFDLQCIIKPHYPARVPVSVTWRFQPVGTVEFHDLVTFTRDGGVQWGDKSSTFRTRTAIEKAESSNNVRLSISRASDTEAGKYQCVAELWRRNYNNTWTRLAERTSNLLEIRVLQPVTKLQVSKSKRTLTLVENRAIQLNCSVKSQTSPNSHFAVLWYVHKPSDADGKLILKTTHSSAFEYGTYAEEEGLRGRLQFERHVSGGLFSLTVQRAEVSDSGSYYCHVEEWLLSPNYAWYKLAEEVSGRTEVTVKQPDSRLKLSQVQGSLSVLETRQIQLECVVLNRTSVASQLLVEWFVWKPNHPEREVVAHLSRDATFHYGEQAAKNNLKGRLHAESPSSGVYRLFIQNVAVQDSGTYSCRVEEWLPSPSGVWYKRAEDTAGQTAVTVMRPDAALQVDTVVPNATVTEKAAFQLDCSILSRSSQDSRFAVAWYSLRTKGGGKRGSLGIDEQEEEEEEEDISQEEDSEDPTERTVLLSVGPDAVFGPEGSPWEGRLRFQRLSPLLYRLTVLEASPQDTGNYSCHVEEWLPSPQKEWYRLTEEESAPIGIRVLDTSSTLQSLICSNDALFYFVFFYPFPIFGILIITILLVRFKSRNSSKNSEGKNGVPLLWIKEPHLNYSPTCLEPPVLSIHPGAID</sequence>
<organism>
    <name type="scientific">Mus musculus</name>
    <name type="common">Mouse</name>
    <dbReference type="NCBI Taxonomy" id="10090"/>
    <lineage>
        <taxon>Eukaryota</taxon>
        <taxon>Metazoa</taxon>
        <taxon>Chordata</taxon>
        <taxon>Craniata</taxon>
        <taxon>Vertebrata</taxon>
        <taxon>Euteleostomi</taxon>
        <taxon>Mammalia</taxon>
        <taxon>Eutheria</taxon>
        <taxon>Euarchontoglires</taxon>
        <taxon>Glires</taxon>
        <taxon>Rodentia</taxon>
        <taxon>Myomorpha</taxon>
        <taxon>Muroidea</taxon>
        <taxon>Muridae</taxon>
        <taxon>Murinae</taxon>
        <taxon>Mus</taxon>
        <taxon>Mus</taxon>
    </lineage>
</organism>
<proteinExistence type="evidence at protein level"/>
<gene>
    <name type="primary">Igsf3</name>
    <name type="synonym">Kiaa0466</name>
</gene>
<comment type="subcellular location">
    <subcellularLocation>
        <location evidence="6">Membrane</location>
        <topology evidence="6">Single-pass type I membrane protein</topology>
    </subcellularLocation>
</comment>
<comment type="tissue specificity">
    <text evidence="5">Expressed in the lacrimal duct and lacrimal gland.</text>
</comment>
<comment type="developmental stage">
    <text evidence="5">Expressed in the lacrimal duct at embryonic day (E)19 and in both the lacrimal duct and lacrimal gland at post natal day (P)30.</text>
</comment>
<comment type="sequence caution" evidence="6">
    <conflict type="erroneous initiation">
        <sequence resource="EMBL-CDS" id="BAC97961"/>
    </conflict>
    <text>Extended N-terminus.</text>
</comment>
<name>IGSF3_MOUSE</name>